<dbReference type="EC" id="2.7.7.6" evidence="1"/>
<dbReference type="EMBL" id="CP000512">
    <property type="protein sequence ID" value="ABM34135.1"/>
    <property type="molecule type" value="Genomic_DNA"/>
</dbReference>
<dbReference type="RefSeq" id="WP_011796632.1">
    <property type="nucleotide sequence ID" value="NC_008752.1"/>
</dbReference>
<dbReference type="SMR" id="A1TT47"/>
<dbReference type="STRING" id="397945.Aave_3584"/>
<dbReference type="GeneID" id="79791534"/>
<dbReference type="KEGG" id="aav:Aave_3584"/>
<dbReference type="eggNOG" id="COG1758">
    <property type="taxonomic scope" value="Bacteria"/>
</dbReference>
<dbReference type="HOGENOM" id="CLU_125406_5_1_4"/>
<dbReference type="OrthoDB" id="9796300at2"/>
<dbReference type="Proteomes" id="UP000002596">
    <property type="component" value="Chromosome"/>
</dbReference>
<dbReference type="GO" id="GO:0000428">
    <property type="term" value="C:DNA-directed RNA polymerase complex"/>
    <property type="evidence" value="ECO:0007669"/>
    <property type="project" value="UniProtKB-KW"/>
</dbReference>
<dbReference type="GO" id="GO:0003677">
    <property type="term" value="F:DNA binding"/>
    <property type="evidence" value="ECO:0007669"/>
    <property type="project" value="UniProtKB-UniRule"/>
</dbReference>
<dbReference type="GO" id="GO:0003899">
    <property type="term" value="F:DNA-directed RNA polymerase activity"/>
    <property type="evidence" value="ECO:0007669"/>
    <property type="project" value="UniProtKB-UniRule"/>
</dbReference>
<dbReference type="GO" id="GO:0006351">
    <property type="term" value="P:DNA-templated transcription"/>
    <property type="evidence" value="ECO:0007669"/>
    <property type="project" value="UniProtKB-UniRule"/>
</dbReference>
<dbReference type="Gene3D" id="3.90.940.10">
    <property type="match status" value="1"/>
</dbReference>
<dbReference type="HAMAP" id="MF_00366">
    <property type="entry name" value="RNApol_bact_RpoZ"/>
    <property type="match status" value="1"/>
</dbReference>
<dbReference type="InterPro" id="IPR003716">
    <property type="entry name" value="DNA-dir_RNA_pol_omega"/>
</dbReference>
<dbReference type="InterPro" id="IPR006110">
    <property type="entry name" value="Pol_omega/Rpo6/RPB6"/>
</dbReference>
<dbReference type="InterPro" id="IPR036161">
    <property type="entry name" value="RPB6/omega-like_sf"/>
</dbReference>
<dbReference type="NCBIfam" id="TIGR00690">
    <property type="entry name" value="rpoZ"/>
    <property type="match status" value="1"/>
</dbReference>
<dbReference type="PANTHER" id="PTHR34476">
    <property type="entry name" value="DNA-DIRECTED RNA POLYMERASE SUBUNIT OMEGA"/>
    <property type="match status" value="1"/>
</dbReference>
<dbReference type="PANTHER" id="PTHR34476:SF1">
    <property type="entry name" value="DNA-DIRECTED RNA POLYMERASE SUBUNIT OMEGA"/>
    <property type="match status" value="1"/>
</dbReference>
<dbReference type="Pfam" id="PF01192">
    <property type="entry name" value="RNA_pol_Rpb6"/>
    <property type="match status" value="1"/>
</dbReference>
<dbReference type="SMART" id="SM01409">
    <property type="entry name" value="RNA_pol_Rpb6"/>
    <property type="match status" value="1"/>
</dbReference>
<dbReference type="SUPFAM" id="SSF63562">
    <property type="entry name" value="RPB6/omega subunit-like"/>
    <property type="match status" value="1"/>
</dbReference>
<organism>
    <name type="scientific">Paracidovorax citrulli (strain AAC00-1)</name>
    <name type="common">Acidovorax citrulli</name>
    <dbReference type="NCBI Taxonomy" id="397945"/>
    <lineage>
        <taxon>Bacteria</taxon>
        <taxon>Pseudomonadati</taxon>
        <taxon>Pseudomonadota</taxon>
        <taxon>Betaproteobacteria</taxon>
        <taxon>Burkholderiales</taxon>
        <taxon>Comamonadaceae</taxon>
        <taxon>Paracidovorax</taxon>
    </lineage>
</organism>
<gene>
    <name evidence="1" type="primary">rpoZ</name>
    <name type="ordered locus">Aave_3584</name>
</gene>
<evidence type="ECO:0000255" key="1">
    <source>
        <dbReference type="HAMAP-Rule" id="MF_00366"/>
    </source>
</evidence>
<comment type="function">
    <text evidence="1">Promotes RNA polymerase assembly. Latches the N- and C-terminal regions of the beta' subunit thereby facilitating its interaction with the beta and alpha subunits.</text>
</comment>
<comment type="catalytic activity">
    <reaction evidence="1">
        <text>RNA(n) + a ribonucleoside 5'-triphosphate = RNA(n+1) + diphosphate</text>
        <dbReference type="Rhea" id="RHEA:21248"/>
        <dbReference type="Rhea" id="RHEA-COMP:14527"/>
        <dbReference type="Rhea" id="RHEA-COMP:17342"/>
        <dbReference type="ChEBI" id="CHEBI:33019"/>
        <dbReference type="ChEBI" id="CHEBI:61557"/>
        <dbReference type="ChEBI" id="CHEBI:140395"/>
        <dbReference type="EC" id="2.7.7.6"/>
    </reaction>
</comment>
<comment type="subunit">
    <text evidence="1">The RNAP catalytic core consists of 2 alpha, 1 beta, 1 beta' and 1 omega subunit. When a sigma factor is associated with the core the holoenzyme is formed, which can initiate transcription.</text>
</comment>
<comment type="similarity">
    <text evidence="1">Belongs to the RNA polymerase subunit omega family.</text>
</comment>
<protein>
    <recommendedName>
        <fullName evidence="1">DNA-directed RNA polymerase subunit omega</fullName>
        <shortName evidence="1">RNAP omega subunit</shortName>
        <ecNumber evidence="1">2.7.7.6</ecNumber>
    </recommendedName>
    <alternativeName>
        <fullName evidence="1">RNA polymerase omega subunit</fullName>
    </alternativeName>
    <alternativeName>
        <fullName evidence="1">Transcriptase subunit omega</fullName>
    </alternativeName>
</protein>
<name>RPOZ_PARC0</name>
<sequence>MARITVEDCLEHIPNRFQLVLAATYRARMLSQGHAPKIESRNKPAVTALREIAEGKIGLEMLKKVPG</sequence>
<accession>A1TT47</accession>
<reference key="1">
    <citation type="submission" date="2006-12" db="EMBL/GenBank/DDBJ databases">
        <title>Complete sequence of Acidovorax avenae subsp. citrulli AAC00-1.</title>
        <authorList>
            <person name="Copeland A."/>
            <person name="Lucas S."/>
            <person name="Lapidus A."/>
            <person name="Barry K."/>
            <person name="Detter J.C."/>
            <person name="Glavina del Rio T."/>
            <person name="Dalin E."/>
            <person name="Tice H."/>
            <person name="Pitluck S."/>
            <person name="Kiss H."/>
            <person name="Brettin T."/>
            <person name="Bruce D."/>
            <person name="Han C."/>
            <person name="Tapia R."/>
            <person name="Gilna P."/>
            <person name="Schmutz J."/>
            <person name="Larimer F."/>
            <person name="Land M."/>
            <person name="Hauser L."/>
            <person name="Kyrpides N."/>
            <person name="Kim E."/>
            <person name="Stahl D."/>
            <person name="Richardson P."/>
        </authorList>
    </citation>
    <scope>NUCLEOTIDE SEQUENCE [LARGE SCALE GENOMIC DNA]</scope>
    <source>
        <strain>AAC00-1</strain>
    </source>
</reference>
<keyword id="KW-0240">DNA-directed RNA polymerase</keyword>
<keyword id="KW-0548">Nucleotidyltransferase</keyword>
<keyword id="KW-0804">Transcription</keyword>
<keyword id="KW-0808">Transferase</keyword>
<feature type="chain" id="PRO_1000005875" description="DNA-directed RNA polymerase subunit omega">
    <location>
        <begin position="1"/>
        <end position="67"/>
    </location>
</feature>
<proteinExistence type="inferred from homology"/>